<sequence>MNTVKTVRELRAAVARARSEGKRIGFVPTMGNLHAGHAALVKKAGERADFVVVSIFVNPLQFGPSEDLDTYPRTLAADQERLLEAGCHLLFTPTVEEMYPDGMDGQTRIHVPGVSEGLCGASRPGHFEGVATVVSKLLNMVQPDLALFGEKDFQQLAVIRKLVRDLNLPVQIFGEPTVRAADGLALSSRNGYLDEQQRAAAPAIYRTLRQLGERIRAGAEDFPALLADARQALEQAGLRPDYLEIREPISLRPGVPGDRQLVILAAAYLGSTRLIDNLSVHLD</sequence>
<gene>
    <name evidence="1" type="primary">panC</name>
    <name type="ordered locus">PA4730</name>
</gene>
<protein>
    <recommendedName>
        <fullName evidence="1">Pantothenate synthetase</fullName>
        <shortName evidence="1">PS</shortName>
        <ecNumber evidence="1">6.3.2.1</ecNumber>
    </recommendedName>
    <alternativeName>
        <fullName evidence="1">Pantoate--beta-alanine ligase</fullName>
    </alternativeName>
    <alternativeName>
        <fullName evidence="1">Pantoate-activating enzyme</fullName>
    </alternativeName>
</protein>
<reference key="1">
    <citation type="journal article" date="2000" name="Nature">
        <title>Complete genome sequence of Pseudomonas aeruginosa PAO1, an opportunistic pathogen.</title>
        <authorList>
            <person name="Stover C.K."/>
            <person name="Pham X.-Q.T."/>
            <person name="Erwin A.L."/>
            <person name="Mizoguchi S.D."/>
            <person name="Warrener P."/>
            <person name="Hickey M.J."/>
            <person name="Brinkman F.S.L."/>
            <person name="Hufnagle W.O."/>
            <person name="Kowalik D.J."/>
            <person name="Lagrou M."/>
            <person name="Garber R.L."/>
            <person name="Goltry L."/>
            <person name="Tolentino E."/>
            <person name="Westbrock-Wadman S."/>
            <person name="Yuan Y."/>
            <person name="Brody L.L."/>
            <person name="Coulter S.N."/>
            <person name="Folger K.R."/>
            <person name="Kas A."/>
            <person name="Larbig K."/>
            <person name="Lim R.M."/>
            <person name="Smith K.A."/>
            <person name="Spencer D.H."/>
            <person name="Wong G.K.-S."/>
            <person name="Wu Z."/>
            <person name="Paulsen I.T."/>
            <person name="Reizer J."/>
            <person name="Saier M.H. Jr."/>
            <person name="Hancock R.E.W."/>
            <person name="Lory S."/>
            <person name="Olson M.V."/>
        </authorList>
    </citation>
    <scope>NUCLEOTIDE SEQUENCE [LARGE SCALE GENOMIC DNA]</scope>
    <source>
        <strain>ATCC 15692 / DSM 22644 / CIP 104116 / JCM 14847 / LMG 12228 / 1C / PRS 101 / PAO1</strain>
    </source>
</reference>
<evidence type="ECO:0000255" key="1">
    <source>
        <dbReference type="HAMAP-Rule" id="MF_00158"/>
    </source>
</evidence>
<organism>
    <name type="scientific">Pseudomonas aeruginosa (strain ATCC 15692 / DSM 22644 / CIP 104116 / JCM 14847 / LMG 12228 / 1C / PRS 101 / PAO1)</name>
    <dbReference type="NCBI Taxonomy" id="208964"/>
    <lineage>
        <taxon>Bacteria</taxon>
        <taxon>Pseudomonadati</taxon>
        <taxon>Pseudomonadota</taxon>
        <taxon>Gammaproteobacteria</taxon>
        <taxon>Pseudomonadales</taxon>
        <taxon>Pseudomonadaceae</taxon>
        <taxon>Pseudomonas</taxon>
    </lineage>
</organism>
<accession>Q9HV69</accession>
<comment type="function">
    <text evidence="1">Catalyzes the condensation of pantoate with beta-alanine in an ATP-dependent reaction via a pantoyl-adenylate intermediate.</text>
</comment>
<comment type="catalytic activity">
    <reaction evidence="1">
        <text>(R)-pantoate + beta-alanine + ATP = (R)-pantothenate + AMP + diphosphate + H(+)</text>
        <dbReference type="Rhea" id="RHEA:10912"/>
        <dbReference type="ChEBI" id="CHEBI:15378"/>
        <dbReference type="ChEBI" id="CHEBI:15980"/>
        <dbReference type="ChEBI" id="CHEBI:29032"/>
        <dbReference type="ChEBI" id="CHEBI:30616"/>
        <dbReference type="ChEBI" id="CHEBI:33019"/>
        <dbReference type="ChEBI" id="CHEBI:57966"/>
        <dbReference type="ChEBI" id="CHEBI:456215"/>
        <dbReference type="EC" id="6.3.2.1"/>
    </reaction>
</comment>
<comment type="pathway">
    <text evidence="1">Cofactor biosynthesis; (R)-pantothenate biosynthesis; (R)-pantothenate from (R)-pantoate and beta-alanine: step 1/1.</text>
</comment>
<comment type="subunit">
    <text evidence="1">Homodimer.</text>
</comment>
<comment type="subcellular location">
    <subcellularLocation>
        <location evidence="1">Cytoplasm</location>
    </subcellularLocation>
</comment>
<comment type="miscellaneous">
    <text evidence="1">The reaction proceeds by a bi uni uni bi ping pong mechanism.</text>
</comment>
<comment type="similarity">
    <text evidence="1">Belongs to the pantothenate synthetase family.</text>
</comment>
<name>PANC_PSEAE</name>
<dbReference type="EC" id="6.3.2.1" evidence="1"/>
<dbReference type="EMBL" id="AE004091">
    <property type="protein sequence ID" value="AAG08116.1"/>
    <property type="molecule type" value="Genomic_DNA"/>
</dbReference>
<dbReference type="PIR" id="G83055">
    <property type="entry name" value="G83055"/>
</dbReference>
<dbReference type="RefSeq" id="NP_253418.1">
    <property type="nucleotide sequence ID" value="NC_002516.2"/>
</dbReference>
<dbReference type="RefSeq" id="WP_003109313.1">
    <property type="nucleotide sequence ID" value="NZ_QZGE01000018.1"/>
</dbReference>
<dbReference type="SMR" id="Q9HV69"/>
<dbReference type="FunCoup" id="Q9HV69">
    <property type="interactions" value="700"/>
</dbReference>
<dbReference type="STRING" id="208964.PA4730"/>
<dbReference type="PaxDb" id="208964-PA4730"/>
<dbReference type="GeneID" id="881622"/>
<dbReference type="KEGG" id="pae:PA4730"/>
<dbReference type="PATRIC" id="fig|208964.12.peg.4955"/>
<dbReference type="PseudoCAP" id="PA4730"/>
<dbReference type="HOGENOM" id="CLU_047148_0_0_6"/>
<dbReference type="InParanoid" id="Q9HV69"/>
<dbReference type="OrthoDB" id="9773087at2"/>
<dbReference type="PhylomeDB" id="Q9HV69"/>
<dbReference type="BioCyc" id="PAER208964:G1FZ6-4840-MONOMER"/>
<dbReference type="UniPathway" id="UPA00028">
    <property type="reaction ID" value="UER00005"/>
</dbReference>
<dbReference type="Proteomes" id="UP000002438">
    <property type="component" value="Chromosome"/>
</dbReference>
<dbReference type="GO" id="GO:0005829">
    <property type="term" value="C:cytosol"/>
    <property type="evidence" value="ECO:0000318"/>
    <property type="project" value="GO_Central"/>
</dbReference>
<dbReference type="GO" id="GO:0005524">
    <property type="term" value="F:ATP binding"/>
    <property type="evidence" value="ECO:0007669"/>
    <property type="project" value="UniProtKB-KW"/>
</dbReference>
<dbReference type="GO" id="GO:0004592">
    <property type="term" value="F:pantoate-beta-alanine ligase activity"/>
    <property type="evidence" value="ECO:0000318"/>
    <property type="project" value="GO_Central"/>
</dbReference>
<dbReference type="GO" id="GO:0015940">
    <property type="term" value="P:pantothenate biosynthetic process"/>
    <property type="evidence" value="ECO:0000318"/>
    <property type="project" value="GO_Central"/>
</dbReference>
<dbReference type="CDD" id="cd00560">
    <property type="entry name" value="PanC"/>
    <property type="match status" value="1"/>
</dbReference>
<dbReference type="FunFam" id="3.30.1300.10:FF:000001">
    <property type="entry name" value="Pantothenate synthetase"/>
    <property type="match status" value="1"/>
</dbReference>
<dbReference type="FunFam" id="3.40.50.620:FF:000013">
    <property type="entry name" value="Pantothenate synthetase"/>
    <property type="match status" value="1"/>
</dbReference>
<dbReference type="Gene3D" id="3.40.50.620">
    <property type="entry name" value="HUPs"/>
    <property type="match status" value="1"/>
</dbReference>
<dbReference type="Gene3D" id="3.30.1300.10">
    <property type="entry name" value="Pantoate-beta-alanine ligase, C-terminal domain"/>
    <property type="match status" value="1"/>
</dbReference>
<dbReference type="HAMAP" id="MF_00158">
    <property type="entry name" value="PanC"/>
    <property type="match status" value="1"/>
</dbReference>
<dbReference type="InterPro" id="IPR003721">
    <property type="entry name" value="Pantoate_ligase"/>
</dbReference>
<dbReference type="InterPro" id="IPR042176">
    <property type="entry name" value="Pantoate_ligase_C"/>
</dbReference>
<dbReference type="InterPro" id="IPR014729">
    <property type="entry name" value="Rossmann-like_a/b/a_fold"/>
</dbReference>
<dbReference type="NCBIfam" id="TIGR00018">
    <property type="entry name" value="panC"/>
    <property type="match status" value="1"/>
</dbReference>
<dbReference type="PANTHER" id="PTHR21299">
    <property type="entry name" value="CYTIDYLATE KINASE/PANTOATE-BETA-ALANINE LIGASE"/>
    <property type="match status" value="1"/>
</dbReference>
<dbReference type="PANTHER" id="PTHR21299:SF1">
    <property type="entry name" value="PANTOATE--BETA-ALANINE LIGASE"/>
    <property type="match status" value="1"/>
</dbReference>
<dbReference type="Pfam" id="PF02569">
    <property type="entry name" value="Pantoate_ligase"/>
    <property type="match status" value="1"/>
</dbReference>
<dbReference type="SUPFAM" id="SSF52374">
    <property type="entry name" value="Nucleotidylyl transferase"/>
    <property type="match status" value="1"/>
</dbReference>
<feature type="chain" id="PRO_0000128254" description="Pantothenate synthetase">
    <location>
        <begin position="1"/>
        <end position="283"/>
    </location>
</feature>
<feature type="active site" description="Proton donor" evidence="1">
    <location>
        <position position="37"/>
    </location>
</feature>
<feature type="binding site" evidence="1">
    <location>
        <begin position="30"/>
        <end position="37"/>
    </location>
    <ligand>
        <name>ATP</name>
        <dbReference type="ChEBI" id="CHEBI:30616"/>
    </ligand>
</feature>
<feature type="binding site" evidence="1">
    <location>
        <position position="61"/>
    </location>
    <ligand>
        <name>(R)-pantoate</name>
        <dbReference type="ChEBI" id="CHEBI:15980"/>
    </ligand>
</feature>
<feature type="binding site" evidence="1">
    <location>
        <position position="61"/>
    </location>
    <ligand>
        <name>beta-alanine</name>
        <dbReference type="ChEBI" id="CHEBI:57966"/>
    </ligand>
</feature>
<feature type="binding site" evidence="1">
    <location>
        <begin position="149"/>
        <end position="152"/>
    </location>
    <ligand>
        <name>ATP</name>
        <dbReference type="ChEBI" id="CHEBI:30616"/>
    </ligand>
</feature>
<feature type="binding site" evidence="1">
    <location>
        <position position="155"/>
    </location>
    <ligand>
        <name>(R)-pantoate</name>
        <dbReference type="ChEBI" id="CHEBI:15980"/>
    </ligand>
</feature>
<feature type="binding site" evidence="1">
    <location>
        <position position="178"/>
    </location>
    <ligand>
        <name>ATP</name>
        <dbReference type="ChEBI" id="CHEBI:30616"/>
    </ligand>
</feature>
<feature type="binding site" evidence="1">
    <location>
        <begin position="186"/>
        <end position="189"/>
    </location>
    <ligand>
        <name>ATP</name>
        <dbReference type="ChEBI" id="CHEBI:30616"/>
    </ligand>
</feature>
<proteinExistence type="inferred from homology"/>
<keyword id="KW-0067">ATP-binding</keyword>
<keyword id="KW-0963">Cytoplasm</keyword>
<keyword id="KW-0436">Ligase</keyword>
<keyword id="KW-0547">Nucleotide-binding</keyword>
<keyword id="KW-0566">Pantothenate biosynthesis</keyword>
<keyword id="KW-1185">Reference proteome</keyword>